<keyword id="KW-0012">Acyltransferase</keyword>
<keyword id="KW-0436">Ligase</keyword>
<keyword id="KW-0496">Mitochondrion</keyword>
<keyword id="KW-1185">Reference proteome</keyword>
<keyword id="KW-0808">Transferase</keyword>
<keyword id="KW-0809">Transit peptide</keyword>
<protein>
    <recommendedName>
        <fullName>Octanoyl-[acyl-carrier-protein]:protein N-octanoyltransferase LIPT2, mitochondrial</fullName>
    </recommendedName>
    <alternativeName>
        <fullName>Lipoate-protein ligase B</fullName>
    </alternativeName>
    <alternativeName>
        <fullName>Lipoyl/octanoyl transferase</fullName>
    </alternativeName>
    <alternativeName>
        <fullName>Lipoyltransferase 2</fullName>
        <ecNumber evidence="3">2.3.1.181</ecNumber>
    </alternativeName>
    <alternativeName>
        <fullName>Octanoyl-[acyl-carrier-protein]-protein N-octanoyltransferase</fullName>
    </alternativeName>
</protein>
<organism>
    <name type="scientific">Xenopus tropicalis</name>
    <name type="common">Western clawed frog</name>
    <name type="synonym">Silurana tropicalis</name>
    <dbReference type="NCBI Taxonomy" id="8364"/>
    <lineage>
        <taxon>Eukaryota</taxon>
        <taxon>Metazoa</taxon>
        <taxon>Chordata</taxon>
        <taxon>Craniata</taxon>
        <taxon>Vertebrata</taxon>
        <taxon>Euteleostomi</taxon>
        <taxon>Amphibia</taxon>
        <taxon>Batrachia</taxon>
        <taxon>Anura</taxon>
        <taxon>Pipoidea</taxon>
        <taxon>Pipidae</taxon>
        <taxon>Xenopodinae</taxon>
        <taxon>Xenopus</taxon>
        <taxon>Silurana</taxon>
    </lineage>
</organism>
<comment type="function">
    <text evidence="2 3">Catalyzes the transfer of endogenously produced octanoic acid from octanoyl-acyl-carrier-protein (octanoyl-ACP) onto the lipoyl domains of lipoate-dependent enzymes such as the protein H of the glycine cleavage system (GCSH) (By similarity). Lipoyl-ACP can also act as a substrate although octanoyl-ACP is likely to be the physiological substrate (By similarity).</text>
</comment>
<comment type="catalytic activity">
    <reaction evidence="3">
        <text>octanoyl-[ACP] + L-lysyl-[protein] = N(6)-octanoyl-L-lysyl-[protein] + holo-[ACP] + H(+)</text>
        <dbReference type="Rhea" id="RHEA:17665"/>
        <dbReference type="Rhea" id="RHEA-COMP:9636"/>
        <dbReference type="Rhea" id="RHEA-COMP:9685"/>
        <dbReference type="Rhea" id="RHEA-COMP:9752"/>
        <dbReference type="Rhea" id="RHEA-COMP:9928"/>
        <dbReference type="ChEBI" id="CHEBI:15378"/>
        <dbReference type="ChEBI" id="CHEBI:29969"/>
        <dbReference type="ChEBI" id="CHEBI:64479"/>
        <dbReference type="ChEBI" id="CHEBI:78463"/>
        <dbReference type="ChEBI" id="CHEBI:78809"/>
        <dbReference type="EC" id="2.3.1.181"/>
    </reaction>
    <physiologicalReaction direction="left-to-right" evidence="3">
        <dbReference type="Rhea" id="RHEA:17666"/>
    </physiologicalReaction>
</comment>
<comment type="pathway">
    <text>Protein modification; protein lipoylation via endogenous pathway; protein N(6)-(lipoyl)lysine from octanoyl-[acyl-carrier-protein]: step 1/2.</text>
</comment>
<comment type="subcellular location">
    <subcellularLocation>
        <location evidence="2">Mitochondrion</location>
    </subcellularLocation>
</comment>
<comment type="miscellaneous">
    <text evidence="1">In the reaction, the free carboxyl group of octanoic acid is attached via an amide linkage to the epsilon-amino group of a specific lysine residue of lipoyl domains of lipoate-dependent enzymes.</text>
</comment>
<comment type="similarity">
    <text evidence="7">Belongs to the LipB family.</text>
</comment>
<reference key="1">
    <citation type="submission" date="2006-07" db="EMBL/GenBank/DDBJ databases">
        <authorList>
            <consortium name="NIH - Xenopus Gene Collection (XGC) project"/>
        </authorList>
    </citation>
    <scope>NUCLEOTIDE SEQUENCE [LARGE SCALE MRNA]</scope>
    <source>
        <tissue>Brain</tissue>
    </source>
</reference>
<feature type="transit peptide" description="Mitochondrion" evidence="4">
    <location>
        <begin position="1"/>
        <end position="18"/>
    </location>
</feature>
<feature type="chain" id="PRO_0000332308" description="Octanoyl-[acyl-carrier-protein]:protein N-octanoyltransferase LIPT2, mitochondrial">
    <location>
        <begin position="19"/>
        <end position="239"/>
    </location>
</feature>
<feature type="domain" description="BPL/LPL catalytic" evidence="5">
    <location>
        <begin position="37"/>
        <end position="217"/>
    </location>
</feature>
<feature type="region of interest" description="Disordered" evidence="6">
    <location>
        <begin position="220"/>
        <end position="239"/>
    </location>
</feature>
<feature type="active site" description="Acyl-thioester intermediate" evidence="1">
    <location>
        <position position="178"/>
    </location>
</feature>
<feature type="binding site" evidence="1">
    <location>
        <begin position="81"/>
        <end position="88"/>
    </location>
    <ligand>
        <name>substrate</name>
    </ligand>
</feature>
<feature type="binding site" evidence="1">
    <location>
        <begin position="147"/>
        <end position="149"/>
    </location>
    <ligand>
        <name>substrate</name>
    </ligand>
</feature>
<feature type="binding site" evidence="1">
    <location>
        <begin position="160"/>
        <end position="162"/>
    </location>
    <ligand>
        <name>substrate</name>
    </ligand>
</feature>
<feature type="site" description="Lowers pKa of active site Cys" evidence="1">
    <location>
        <position position="144"/>
    </location>
</feature>
<proteinExistence type="evidence at transcript level"/>
<evidence type="ECO:0000250" key="1"/>
<evidence type="ECO:0000250" key="2">
    <source>
        <dbReference type="UniProtKB" id="A6NK58"/>
    </source>
</evidence>
<evidence type="ECO:0000250" key="3">
    <source>
        <dbReference type="UniProtKB" id="Q9D009"/>
    </source>
</evidence>
<evidence type="ECO:0000255" key="4"/>
<evidence type="ECO:0000255" key="5">
    <source>
        <dbReference type="PROSITE-ProRule" id="PRU01067"/>
    </source>
</evidence>
<evidence type="ECO:0000256" key="6">
    <source>
        <dbReference type="SAM" id="MobiDB-lite"/>
    </source>
</evidence>
<evidence type="ECO:0000305" key="7"/>
<sequence>MSVPVLRVRRLGLVGYAEALGVQGRYVRELKAGGEAGSPGGALLLCEHPAVYTVGVRRGRYPGEEEARLRGLGADFQRTDRGGLITFHGPGQLVCYPVLHLGALRRSLRSYVCGLESAVIRLCRGLGLPGERQPDTGVWVRGNKICAIGVHCARHITSHGLALNCNTDLGWFGHIVPCGIVGKGVTSLTQELGRQVTIDDIIAPFLEAFEEEFQCQLVPEQNPEQNPVQNRPDRDAGPL</sequence>
<accession>Q0VFH3</accession>
<name>LIPT2_XENTR</name>
<gene>
    <name type="primary">lipt2</name>
</gene>
<dbReference type="EC" id="2.3.1.181" evidence="3"/>
<dbReference type="EMBL" id="BC118829">
    <property type="protein sequence ID" value="AAI18830.1"/>
    <property type="molecule type" value="mRNA"/>
</dbReference>
<dbReference type="RefSeq" id="NP_001072237.1">
    <property type="nucleotide sequence ID" value="NM_001078769.1"/>
</dbReference>
<dbReference type="SMR" id="Q0VFH3"/>
<dbReference type="FunCoup" id="Q0VFH3">
    <property type="interactions" value="950"/>
</dbReference>
<dbReference type="DNASU" id="779684"/>
<dbReference type="GeneID" id="779684"/>
<dbReference type="KEGG" id="xtr:779684"/>
<dbReference type="CTD" id="387787"/>
<dbReference type="Xenbase" id="XB-GENE-6458907">
    <property type="gene designation" value="lipt2"/>
</dbReference>
<dbReference type="InParanoid" id="Q0VFH3"/>
<dbReference type="OMA" id="GEVTYHC"/>
<dbReference type="OrthoDB" id="19908at2759"/>
<dbReference type="Reactome" id="R-XTR-9857492">
    <property type="pathway name" value="Protein lipoylation"/>
</dbReference>
<dbReference type="UniPathway" id="UPA00538">
    <property type="reaction ID" value="UER00592"/>
</dbReference>
<dbReference type="Proteomes" id="UP000008143">
    <property type="component" value="Chromosome 2"/>
</dbReference>
<dbReference type="GO" id="GO:0005739">
    <property type="term" value="C:mitochondrion"/>
    <property type="evidence" value="ECO:0000250"/>
    <property type="project" value="UniProtKB"/>
</dbReference>
<dbReference type="GO" id="GO:0016874">
    <property type="term" value="F:ligase activity"/>
    <property type="evidence" value="ECO:0007669"/>
    <property type="project" value="UniProtKB-KW"/>
</dbReference>
<dbReference type="GO" id="GO:0033819">
    <property type="term" value="F:lipoyl(octanoyl) transferase activity"/>
    <property type="evidence" value="ECO:0000250"/>
    <property type="project" value="UniProtKB"/>
</dbReference>
<dbReference type="GO" id="GO:2000376">
    <property type="term" value="P:positive regulation of oxygen metabolic process"/>
    <property type="evidence" value="ECO:0000250"/>
    <property type="project" value="UniProtKB"/>
</dbReference>
<dbReference type="GO" id="GO:0009249">
    <property type="term" value="P:protein lipoylation"/>
    <property type="evidence" value="ECO:0000250"/>
    <property type="project" value="UniProtKB"/>
</dbReference>
<dbReference type="CDD" id="cd16444">
    <property type="entry name" value="LipB"/>
    <property type="match status" value="1"/>
</dbReference>
<dbReference type="FunFam" id="3.30.930.10:FF:000035">
    <property type="entry name" value="Putative lipoyltransferase 2, mitochondrial"/>
    <property type="match status" value="1"/>
</dbReference>
<dbReference type="Gene3D" id="3.30.930.10">
    <property type="entry name" value="Bira Bifunctional Protein, Domain 2"/>
    <property type="match status" value="1"/>
</dbReference>
<dbReference type="HAMAP" id="MF_00013">
    <property type="entry name" value="LipB"/>
    <property type="match status" value="1"/>
</dbReference>
<dbReference type="InterPro" id="IPR045864">
    <property type="entry name" value="aa-tRNA-synth_II/BPL/LPL"/>
</dbReference>
<dbReference type="InterPro" id="IPR004143">
    <property type="entry name" value="BPL_LPL_catalytic"/>
</dbReference>
<dbReference type="InterPro" id="IPR000544">
    <property type="entry name" value="Octanoyltransferase"/>
</dbReference>
<dbReference type="InterPro" id="IPR020605">
    <property type="entry name" value="Octanoyltransferase_CS"/>
</dbReference>
<dbReference type="NCBIfam" id="TIGR00214">
    <property type="entry name" value="lipB"/>
    <property type="match status" value="1"/>
</dbReference>
<dbReference type="NCBIfam" id="NF010925">
    <property type="entry name" value="PRK14345.1"/>
    <property type="match status" value="1"/>
</dbReference>
<dbReference type="PANTHER" id="PTHR10993:SF7">
    <property type="entry name" value="LIPOYLTRANSFERASE 2, MITOCHONDRIAL-RELATED"/>
    <property type="match status" value="1"/>
</dbReference>
<dbReference type="PANTHER" id="PTHR10993">
    <property type="entry name" value="OCTANOYLTRANSFERASE"/>
    <property type="match status" value="1"/>
</dbReference>
<dbReference type="Pfam" id="PF21948">
    <property type="entry name" value="LplA-B_cat"/>
    <property type="match status" value="1"/>
</dbReference>
<dbReference type="PIRSF" id="PIRSF016262">
    <property type="entry name" value="LPLase"/>
    <property type="match status" value="1"/>
</dbReference>
<dbReference type="SUPFAM" id="SSF55681">
    <property type="entry name" value="Class II aaRS and biotin synthetases"/>
    <property type="match status" value="1"/>
</dbReference>
<dbReference type="PROSITE" id="PS51733">
    <property type="entry name" value="BPL_LPL_CATALYTIC"/>
    <property type="match status" value="1"/>
</dbReference>
<dbReference type="PROSITE" id="PS01313">
    <property type="entry name" value="LIPB"/>
    <property type="match status" value="1"/>
</dbReference>